<sequence length="458" mass="48663">MTTGPLPRRVALISVHTSPLAQPGTGDAGGMNVYVWQTATRLARRGVEVEIFTRATSSSDAPRVAAAPRVTVRNVVAGPFEGLDKRDLPAQLCAFTAGVLRAEAAQEPGYYDLIHSHYWLSGQVGWLARDRWGVPLVHTAHTLAAVKNASLAAGDTAEPQLRVIGEQQVVDEADRLIANTETEASELISMYGADPARIDVVTPGADLDCYTPGPREMARTSLGLDQNEAIVTFVGRIQPLKAPDLLIEAAAPLIRRSRTSRRPVRVLIVGGPSGSGLDRPTALIDLAHDLGIADAVTFLPPQAPARLADVYRASNLVAVPSHSESFGLVAIEAQACGTPVLAADVGGLSVAVAGGRTGVLVGSHAVGDWTNALEKALAQPDRLAEMGRNARVHAEQFSWDHTVDAMLSSYSRAMQSFAARNPDAAQSVAAQNVTGSSSRTRRPWRRRRSTLLPMTGRS</sequence>
<protein>
    <recommendedName>
        <fullName>D-inositol 3-phosphate glycosyltransferase</fullName>
        <ecNumber evidence="1">2.4.1.250</ecNumber>
    </recommendedName>
    <alternativeName>
        <fullName evidence="1">N-acetylglucosamine-inositol-phosphate N-acetylglucosaminyltransferase</fullName>
        <shortName evidence="1">GlcNAc-Ins-P N-acetylglucosaminyltransferase</shortName>
    </alternativeName>
</protein>
<proteinExistence type="inferred from homology"/>
<gene>
    <name evidence="1" type="primary">mshA</name>
    <name type="ordered locus">Gbro_0989</name>
</gene>
<evidence type="ECO:0000255" key="1">
    <source>
        <dbReference type="HAMAP-Rule" id="MF_01695"/>
    </source>
</evidence>
<evidence type="ECO:0000256" key="2">
    <source>
        <dbReference type="SAM" id="MobiDB-lite"/>
    </source>
</evidence>
<reference key="1">
    <citation type="submission" date="2009-10" db="EMBL/GenBank/DDBJ databases">
        <title>The complete chromosome of Gordonia bronchialis DSM 43247.</title>
        <authorList>
            <consortium name="US DOE Joint Genome Institute (JGI-PGF)"/>
            <person name="Lucas S."/>
            <person name="Copeland A."/>
            <person name="Lapidus A."/>
            <person name="Glavina del Rio T."/>
            <person name="Dalin E."/>
            <person name="Tice H."/>
            <person name="Bruce D."/>
            <person name="Goodwin L."/>
            <person name="Pitluck S."/>
            <person name="Kyrpides N."/>
            <person name="Mavromatis K."/>
            <person name="Ivanova N."/>
            <person name="Ovchinnikova G."/>
            <person name="Saunders E."/>
            <person name="Brettin T."/>
            <person name="Detter J.C."/>
            <person name="Han C."/>
            <person name="Larimer F."/>
            <person name="Land M."/>
            <person name="Hauser L."/>
            <person name="Markowitz V."/>
            <person name="Cheng J.-F."/>
            <person name="Hugenholtz P."/>
            <person name="Woyke T."/>
            <person name="Wu D."/>
            <person name="Jando M."/>
            <person name="Schneider S."/>
            <person name="Goeker M."/>
            <person name="Klenk H.-P."/>
            <person name="Eisen J.A."/>
        </authorList>
    </citation>
    <scope>NUCLEOTIDE SEQUENCE [LARGE SCALE GENOMIC DNA]</scope>
    <source>
        <strain>ATCC 25592 / DSM 43247 / BCRC 13721 / JCM 3198 / KCTC 3076 / NBRC 16047 / NCTC 10667</strain>
    </source>
</reference>
<feature type="chain" id="PRO_0000400126" description="D-inositol 3-phosphate glycosyltransferase">
    <location>
        <begin position="1"/>
        <end position="458"/>
    </location>
</feature>
<feature type="region of interest" description="Disordered" evidence="2">
    <location>
        <begin position="428"/>
        <end position="458"/>
    </location>
</feature>
<feature type="compositionally biased region" description="Basic residues" evidence="2">
    <location>
        <begin position="439"/>
        <end position="449"/>
    </location>
</feature>
<feature type="binding site" evidence="1">
    <location>
        <position position="16"/>
    </location>
    <ligand>
        <name>1D-myo-inositol 3-phosphate</name>
        <dbReference type="ChEBI" id="CHEBI:58401"/>
    </ligand>
</feature>
<feature type="binding site" evidence="1">
    <location>
        <begin position="22"/>
        <end position="23"/>
    </location>
    <ligand>
        <name>UDP-N-acetyl-alpha-D-glucosamine</name>
        <dbReference type="ChEBI" id="CHEBI:57705"/>
    </ligand>
</feature>
<feature type="binding site" evidence="1">
    <location>
        <begin position="27"/>
        <end position="32"/>
    </location>
    <ligand>
        <name>1D-myo-inositol 3-phosphate</name>
        <dbReference type="ChEBI" id="CHEBI:58401"/>
    </ligand>
</feature>
<feature type="binding site" evidence="1">
    <location>
        <position position="30"/>
    </location>
    <ligand>
        <name>UDP-N-acetyl-alpha-D-glucosamine</name>
        <dbReference type="ChEBI" id="CHEBI:57705"/>
    </ligand>
</feature>
<feature type="binding site" evidence="1">
    <location>
        <position position="85"/>
    </location>
    <ligand>
        <name>1D-myo-inositol 3-phosphate</name>
        <dbReference type="ChEBI" id="CHEBI:58401"/>
    </ligand>
</feature>
<feature type="binding site" evidence="1">
    <location>
        <position position="118"/>
    </location>
    <ligand>
        <name>1D-myo-inositol 3-phosphate</name>
        <dbReference type="ChEBI" id="CHEBI:58401"/>
    </ligand>
</feature>
<feature type="binding site" evidence="1">
    <location>
        <position position="142"/>
    </location>
    <ligand>
        <name>1D-myo-inositol 3-phosphate</name>
        <dbReference type="ChEBI" id="CHEBI:58401"/>
    </ligand>
</feature>
<feature type="binding site" evidence="1">
    <location>
        <position position="162"/>
    </location>
    <ligand>
        <name>1D-myo-inositol 3-phosphate</name>
        <dbReference type="ChEBI" id="CHEBI:58401"/>
    </ligand>
</feature>
<feature type="binding site" evidence="1">
    <location>
        <position position="236"/>
    </location>
    <ligand>
        <name>UDP-N-acetyl-alpha-D-glucosamine</name>
        <dbReference type="ChEBI" id="CHEBI:57705"/>
    </ligand>
</feature>
<feature type="binding site" evidence="1">
    <location>
        <position position="241"/>
    </location>
    <ligand>
        <name>UDP-N-acetyl-alpha-D-glucosamine</name>
        <dbReference type="ChEBI" id="CHEBI:57705"/>
    </ligand>
</feature>
<feature type="binding site" evidence="1">
    <location>
        <position position="302"/>
    </location>
    <ligand>
        <name>UDP-N-acetyl-alpha-D-glucosamine</name>
        <dbReference type="ChEBI" id="CHEBI:57705"/>
    </ligand>
</feature>
<feature type="binding site" evidence="1">
    <location>
        <position position="311"/>
    </location>
    <ligand>
        <name>Mg(2+)</name>
        <dbReference type="ChEBI" id="CHEBI:18420"/>
    </ligand>
</feature>
<feature type="binding site" evidence="1">
    <location>
        <position position="312"/>
    </location>
    <ligand>
        <name>Mg(2+)</name>
        <dbReference type="ChEBI" id="CHEBI:18420"/>
    </ligand>
</feature>
<feature type="binding site" evidence="1">
    <location>
        <position position="314"/>
    </location>
    <ligand>
        <name>Mg(2+)</name>
        <dbReference type="ChEBI" id="CHEBI:18420"/>
    </ligand>
</feature>
<feature type="binding site" evidence="1">
    <location>
        <position position="324"/>
    </location>
    <ligand>
        <name>UDP-N-acetyl-alpha-D-glucosamine</name>
        <dbReference type="ChEBI" id="CHEBI:57705"/>
    </ligand>
</feature>
<feature type="binding site" evidence="1">
    <location>
        <position position="332"/>
    </location>
    <ligand>
        <name>UDP-N-acetyl-alpha-D-glucosamine</name>
        <dbReference type="ChEBI" id="CHEBI:57705"/>
    </ligand>
</feature>
<feature type="binding site" evidence="1">
    <location>
        <position position="338"/>
    </location>
    <ligand>
        <name>Mg(2+)</name>
        <dbReference type="ChEBI" id="CHEBI:18420"/>
    </ligand>
</feature>
<keyword id="KW-0328">Glycosyltransferase</keyword>
<keyword id="KW-0460">Magnesium</keyword>
<keyword id="KW-0479">Metal-binding</keyword>
<keyword id="KW-1185">Reference proteome</keyword>
<keyword id="KW-0808">Transferase</keyword>
<comment type="function">
    <text evidence="1">Catalyzes the transfer of a N-acetyl-glucosamine moiety to 1D-myo-inositol 3-phosphate to produce 1D-myo-inositol 2-acetamido-2-deoxy-glucopyranoside 3-phosphate in the mycothiol biosynthesis pathway.</text>
</comment>
<comment type="catalytic activity">
    <reaction evidence="1">
        <text>1D-myo-inositol 3-phosphate + UDP-N-acetyl-alpha-D-glucosamine = 1D-myo-inositol 2-acetamido-2-deoxy-alpha-D-glucopyranoside 3-phosphate + UDP + H(+)</text>
        <dbReference type="Rhea" id="RHEA:26188"/>
        <dbReference type="ChEBI" id="CHEBI:15378"/>
        <dbReference type="ChEBI" id="CHEBI:57705"/>
        <dbReference type="ChEBI" id="CHEBI:58223"/>
        <dbReference type="ChEBI" id="CHEBI:58401"/>
        <dbReference type="ChEBI" id="CHEBI:58892"/>
        <dbReference type="EC" id="2.4.1.250"/>
    </reaction>
</comment>
<comment type="subunit">
    <text evidence="1">Homodimer.</text>
</comment>
<comment type="similarity">
    <text evidence="1">Belongs to the glycosyltransferase group 1 family. MshA subfamily.</text>
</comment>
<name>MSHA_GORB4</name>
<dbReference type="EC" id="2.4.1.250" evidence="1"/>
<dbReference type="EMBL" id="CP001802">
    <property type="protein sequence ID" value="ACY20300.1"/>
    <property type="molecule type" value="Genomic_DNA"/>
</dbReference>
<dbReference type="RefSeq" id="WP_012832879.1">
    <property type="nucleotide sequence ID" value="NC_013441.1"/>
</dbReference>
<dbReference type="SMR" id="D0L476"/>
<dbReference type="STRING" id="526226.Gbro_0989"/>
<dbReference type="CAZy" id="GT4">
    <property type="family name" value="Glycosyltransferase Family 4"/>
</dbReference>
<dbReference type="KEGG" id="gbr:Gbro_0989"/>
<dbReference type="eggNOG" id="COG0438">
    <property type="taxonomic scope" value="Bacteria"/>
</dbReference>
<dbReference type="HOGENOM" id="CLU_009583_2_3_11"/>
<dbReference type="OrthoDB" id="9810929at2"/>
<dbReference type="Proteomes" id="UP000001219">
    <property type="component" value="Chromosome"/>
</dbReference>
<dbReference type="GO" id="GO:0008375">
    <property type="term" value="F:acetylglucosaminyltransferase activity"/>
    <property type="evidence" value="ECO:0007669"/>
    <property type="project" value="UniProtKB-UniRule"/>
</dbReference>
<dbReference type="GO" id="GO:0102710">
    <property type="term" value="F:D-inositol-3-phosphate glycosyltransferase activity"/>
    <property type="evidence" value="ECO:0007669"/>
    <property type="project" value="UniProtKB-EC"/>
</dbReference>
<dbReference type="GO" id="GO:0000287">
    <property type="term" value="F:magnesium ion binding"/>
    <property type="evidence" value="ECO:0007669"/>
    <property type="project" value="UniProtKB-UniRule"/>
</dbReference>
<dbReference type="GO" id="GO:0010125">
    <property type="term" value="P:mycothiol biosynthetic process"/>
    <property type="evidence" value="ECO:0007669"/>
    <property type="project" value="UniProtKB-UniRule"/>
</dbReference>
<dbReference type="CDD" id="cd03800">
    <property type="entry name" value="GT4_sucrose_synthase"/>
    <property type="match status" value="1"/>
</dbReference>
<dbReference type="Gene3D" id="3.40.50.2000">
    <property type="entry name" value="Glycogen Phosphorylase B"/>
    <property type="match status" value="2"/>
</dbReference>
<dbReference type="HAMAP" id="MF_01695">
    <property type="entry name" value="MshA"/>
    <property type="match status" value="1"/>
</dbReference>
<dbReference type="InterPro" id="IPR001296">
    <property type="entry name" value="Glyco_trans_1"/>
</dbReference>
<dbReference type="InterPro" id="IPR028098">
    <property type="entry name" value="Glyco_trans_4-like_N"/>
</dbReference>
<dbReference type="InterPro" id="IPR017814">
    <property type="entry name" value="Mycothiol_biosynthesis_MshA"/>
</dbReference>
<dbReference type="NCBIfam" id="TIGR03449">
    <property type="entry name" value="mycothiol_MshA"/>
    <property type="match status" value="1"/>
</dbReference>
<dbReference type="PANTHER" id="PTHR12526:SF510">
    <property type="entry name" value="D-INOSITOL 3-PHOSPHATE GLYCOSYLTRANSFERASE"/>
    <property type="match status" value="1"/>
</dbReference>
<dbReference type="PANTHER" id="PTHR12526">
    <property type="entry name" value="GLYCOSYLTRANSFERASE"/>
    <property type="match status" value="1"/>
</dbReference>
<dbReference type="Pfam" id="PF13579">
    <property type="entry name" value="Glyco_trans_4_4"/>
    <property type="match status" value="1"/>
</dbReference>
<dbReference type="Pfam" id="PF00534">
    <property type="entry name" value="Glycos_transf_1"/>
    <property type="match status" value="1"/>
</dbReference>
<dbReference type="SUPFAM" id="SSF53756">
    <property type="entry name" value="UDP-Glycosyltransferase/glycogen phosphorylase"/>
    <property type="match status" value="1"/>
</dbReference>
<accession>D0L476</accession>
<organism>
    <name type="scientific">Gordonia bronchialis (strain ATCC 25592 / DSM 43247 / BCRC 13721 / JCM 3198 / KCTC 3076 / NBRC 16047 / NCTC 10667)</name>
    <name type="common">Rhodococcus bronchialis</name>
    <dbReference type="NCBI Taxonomy" id="526226"/>
    <lineage>
        <taxon>Bacteria</taxon>
        <taxon>Bacillati</taxon>
        <taxon>Actinomycetota</taxon>
        <taxon>Actinomycetes</taxon>
        <taxon>Mycobacteriales</taxon>
        <taxon>Gordoniaceae</taxon>
        <taxon>Gordonia</taxon>
    </lineage>
</organism>